<protein>
    <recommendedName>
        <fullName evidence="1">Small ribosomal subunit protein uS10</fullName>
    </recommendedName>
    <alternativeName>
        <fullName evidence="2">30S ribosomal protein S10</fullName>
    </alternativeName>
</protein>
<comment type="function">
    <text evidence="1">Involved in the binding of tRNA to the ribosomes.</text>
</comment>
<comment type="subunit">
    <text evidence="1">Part of the 30S ribosomal subunit.</text>
</comment>
<comment type="similarity">
    <text evidence="1">Belongs to the universal ribosomal protein uS10 family.</text>
</comment>
<name>RS10_PECCP</name>
<accession>C6DG75</accession>
<gene>
    <name evidence="1" type="primary">rpsJ</name>
    <name type="ordered locus">PC1_3823</name>
</gene>
<organism>
    <name type="scientific">Pectobacterium carotovorum subsp. carotovorum (strain PC1)</name>
    <dbReference type="NCBI Taxonomy" id="561230"/>
    <lineage>
        <taxon>Bacteria</taxon>
        <taxon>Pseudomonadati</taxon>
        <taxon>Pseudomonadota</taxon>
        <taxon>Gammaproteobacteria</taxon>
        <taxon>Enterobacterales</taxon>
        <taxon>Pectobacteriaceae</taxon>
        <taxon>Pectobacterium</taxon>
    </lineage>
</organism>
<sequence length="103" mass="11767">MQNQRIRIRLKAFDHRLIDQSTAEIVETAKRTGAQVRGPIPLPTRKERFTVLISPHVNKDARDQYEIRTHKRLVDIVEPTEKTVDALMRLDLAAGVDVQISLG</sequence>
<proteinExistence type="inferred from homology"/>
<keyword id="KW-0687">Ribonucleoprotein</keyword>
<keyword id="KW-0689">Ribosomal protein</keyword>
<feature type="chain" id="PRO_1000206592" description="Small ribosomal subunit protein uS10">
    <location>
        <begin position="1"/>
        <end position="103"/>
    </location>
</feature>
<evidence type="ECO:0000255" key="1">
    <source>
        <dbReference type="HAMAP-Rule" id="MF_00508"/>
    </source>
</evidence>
<evidence type="ECO:0000305" key="2"/>
<dbReference type="EMBL" id="CP001657">
    <property type="protein sequence ID" value="ACT14838.1"/>
    <property type="molecule type" value="Genomic_DNA"/>
</dbReference>
<dbReference type="RefSeq" id="WP_001181005.1">
    <property type="nucleotide sequence ID" value="NC_012917.1"/>
</dbReference>
<dbReference type="SMR" id="C6DG75"/>
<dbReference type="STRING" id="561230.PC1_3823"/>
<dbReference type="GeneID" id="98390443"/>
<dbReference type="KEGG" id="pct:PC1_3823"/>
<dbReference type="eggNOG" id="COG0051">
    <property type="taxonomic scope" value="Bacteria"/>
</dbReference>
<dbReference type="HOGENOM" id="CLU_122625_1_3_6"/>
<dbReference type="OrthoDB" id="9804464at2"/>
<dbReference type="Proteomes" id="UP000002736">
    <property type="component" value="Chromosome"/>
</dbReference>
<dbReference type="GO" id="GO:1990904">
    <property type="term" value="C:ribonucleoprotein complex"/>
    <property type="evidence" value="ECO:0007669"/>
    <property type="project" value="UniProtKB-KW"/>
</dbReference>
<dbReference type="GO" id="GO:0005840">
    <property type="term" value="C:ribosome"/>
    <property type="evidence" value="ECO:0007669"/>
    <property type="project" value="UniProtKB-KW"/>
</dbReference>
<dbReference type="GO" id="GO:0003735">
    <property type="term" value="F:structural constituent of ribosome"/>
    <property type="evidence" value="ECO:0007669"/>
    <property type="project" value="InterPro"/>
</dbReference>
<dbReference type="GO" id="GO:0000049">
    <property type="term" value="F:tRNA binding"/>
    <property type="evidence" value="ECO:0007669"/>
    <property type="project" value="UniProtKB-UniRule"/>
</dbReference>
<dbReference type="GO" id="GO:0006412">
    <property type="term" value="P:translation"/>
    <property type="evidence" value="ECO:0007669"/>
    <property type="project" value="UniProtKB-UniRule"/>
</dbReference>
<dbReference type="FunFam" id="3.30.70.600:FF:000001">
    <property type="entry name" value="30S ribosomal protein S10"/>
    <property type="match status" value="1"/>
</dbReference>
<dbReference type="Gene3D" id="3.30.70.600">
    <property type="entry name" value="Ribosomal protein S10 domain"/>
    <property type="match status" value="1"/>
</dbReference>
<dbReference type="HAMAP" id="MF_00508">
    <property type="entry name" value="Ribosomal_uS10"/>
    <property type="match status" value="1"/>
</dbReference>
<dbReference type="InterPro" id="IPR001848">
    <property type="entry name" value="Ribosomal_uS10"/>
</dbReference>
<dbReference type="InterPro" id="IPR018268">
    <property type="entry name" value="Ribosomal_uS10_CS"/>
</dbReference>
<dbReference type="InterPro" id="IPR027486">
    <property type="entry name" value="Ribosomal_uS10_dom"/>
</dbReference>
<dbReference type="InterPro" id="IPR036838">
    <property type="entry name" value="Ribosomal_uS10_dom_sf"/>
</dbReference>
<dbReference type="NCBIfam" id="NF001861">
    <property type="entry name" value="PRK00596.1"/>
    <property type="match status" value="1"/>
</dbReference>
<dbReference type="NCBIfam" id="TIGR01049">
    <property type="entry name" value="rpsJ_bact"/>
    <property type="match status" value="1"/>
</dbReference>
<dbReference type="PANTHER" id="PTHR11700">
    <property type="entry name" value="30S RIBOSOMAL PROTEIN S10 FAMILY MEMBER"/>
    <property type="match status" value="1"/>
</dbReference>
<dbReference type="Pfam" id="PF00338">
    <property type="entry name" value="Ribosomal_S10"/>
    <property type="match status" value="1"/>
</dbReference>
<dbReference type="PRINTS" id="PR00971">
    <property type="entry name" value="RIBOSOMALS10"/>
</dbReference>
<dbReference type="SMART" id="SM01403">
    <property type="entry name" value="Ribosomal_S10"/>
    <property type="match status" value="1"/>
</dbReference>
<dbReference type="SUPFAM" id="SSF54999">
    <property type="entry name" value="Ribosomal protein S10"/>
    <property type="match status" value="1"/>
</dbReference>
<dbReference type="PROSITE" id="PS00361">
    <property type="entry name" value="RIBOSOMAL_S10"/>
    <property type="match status" value="1"/>
</dbReference>
<reference key="1">
    <citation type="submission" date="2009-07" db="EMBL/GenBank/DDBJ databases">
        <title>Complete sequence of Pectobacterium carotovorum subsp. carotovorum PC1.</title>
        <authorList>
            <consortium name="US DOE Joint Genome Institute"/>
            <person name="Lucas S."/>
            <person name="Copeland A."/>
            <person name="Lapidus A."/>
            <person name="Glavina del Rio T."/>
            <person name="Tice H."/>
            <person name="Bruce D."/>
            <person name="Goodwin L."/>
            <person name="Pitluck S."/>
            <person name="Munk A.C."/>
            <person name="Brettin T."/>
            <person name="Detter J.C."/>
            <person name="Han C."/>
            <person name="Tapia R."/>
            <person name="Larimer F."/>
            <person name="Land M."/>
            <person name="Hauser L."/>
            <person name="Kyrpides N."/>
            <person name="Mikhailova N."/>
            <person name="Balakrishnan V."/>
            <person name="Glasner J."/>
            <person name="Perna N.T."/>
        </authorList>
    </citation>
    <scope>NUCLEOTIDE SEQUENCE [LARGE SCALE GENOMIC DNA]</scope>
    <source>
        <strain>PC1</strain>
    </source>
</reference>